<reference key="1">
    <citation type="submission" date="2009-06" db="EMBL/GenBank/DDBJ databases">
        <title>Complete sequence of chromosome of Geopacillus sp. WCH70.</title>
        <authorList>
            <consortium name="US DOE Joint Genome Institute"/>
            <person name="Lucas S."/>
            <person name="Copeland A."/>
            <person name="Lapidus A."/>
            <person name="Glavina del Rio T."/>
            <person name="Dalin E."/>
            <person name="Tice H."/>
            <person name="Bruce D."/>
            <person name="Goodwin L."/>
            <person name="Pitluck S."/>
            <person name="Chertkov O."/>
            <person name="Brettin T."/>
            <person name="Detter J.C."/>
            <person name="Han C."/>
            <person name="Larimer F."/>
            <person name="Land M."/>
            <person name="Hauser L."/>
            <person name="Kyrpides N."/>
            <person name="Mikhailova N."/>
            <person name="Brumm P."/>
            <person name="Mead D.A."/>
            <person name="Richardson P."/>
        </authorList>
    </citation>
    <scope>NUCLEOTIDE SEQUENCE [LARGE SCALE GENOMIC DNA]</scope>
    <source>
        <strain>WCH70</strain>
    </source>
</reference>
<keyword id="KW-0687">Ribonucleoprotein</keyword>
<keyword id="KW-0689">Ribosomal protein</keyword>
<name>RL27_GEOSW</name>
<dbReference type="EMBL" id="CP001638">
    <property type="protein sequence ID" value="ACS25235.1"/>
    <property type="molecule type" value="Genomic_DNA"/>
</dbReference>
<dbReference type="SMR" id="C5D5G7"/>
<dbReference type="STRING" id="471223.GWCH70_2540"/>
<dbReference type="KEGG" id="gwc:GWCH70_2540"/>
<dbReference type="eggNOG" id="COG0211">
    <property type="taxonomic scope" value="Bacteria"/>
</dbReference>
<dbReference type="HOGENOM" id="CLU_095424_4_0_9"/>
<dbReference type="OrthoDB" id="9803474at2"/>
<dbReference type="GO" id="GO:0022625">
    <property type="term" value="C:cytosolic large ribosomal subunit"/>
    <property type="evidence" value="ECO:0007669"/>
    <property type="project" value="TreeGrafter"/>
</dbReference>
<dbReference type="GO" id="GO:0003735">
    <property type="term" value="F:structural constituent of ribosome"/>
    <property type="evidence" value="ECO:0007669"/>
    <property type="project" value="InterPro"/>
</dbReference>
<dbReference type="GO" id="GO:0006412">
    <property type="term" value="P:translation"/>
    <property type="evidence" value="ECO:0007669"/>
    <property type="project" value="UniProtKB-UniRule"/>
</dbReference>
<dbReference type="FunFam" id="2.40.50.100:FF:000004">
    <property type="entry name" value="50S ribosomal protein L27"/>
    <property type="match status" value="1"/>
</dbReference>
<dbReference type="Gene3D" id="2.40.50.100">
    <property type="match status" value="1"/>
</dbReference>
<dbReference type="HAMAP" id="MF_00539">
    <property type="entry name" value="Ribosomal_bL27"/>
    <property type="match status" value="1"/>
</dbReference>
<dbReference type="InterPro" id="IPR001684">
    <property type="entry name" value="Ribosomal_bL27"/>
</dbReference>
<dbReference type="InterPro" id="IPR018261">
    <property type="entry name" value="Ribosomal_bL27_CS"/>
</dbReference>
<dbReference type="NCBIfam" id="TIGR00062">
    <property type="entry name" value="L27"/>
    <property type="match status" value="1"/>
</dbReference>
<dbReference type="PANTHER" id="PTHR15893:SF0">
    <property type="entry name" value="LARGE RIBOSOMAL SUBUNIT PROTEIN BL27M"/>
    <property type="match status" value="1"/>
</dbReference>
<dbReference type="PANTHER" id="PTHR15893">
    <property type="entry name" value="RIBOSOMAL PROTEIN L27"/>
    <property type="match status" value="1"/>
</dbReference>
<dbReference type="Pfam" id="PF01016">
    <property type="entry name" value="Ribosomal_L27"/>
    <property type="match status" value="1"/>
</dbReference>
<dbReference type="PRINTS" id="PR00063">
    <property type="entry name" value="RIBOSOMALL27"/>
</dbReference>
<dbReference type="SUPFAM" id="SSF110324">
    <property type="entry name" value="Ribosomal L27 protein-like"/>
    <property type="match status" value="1"/>
</dbReference>
<dbReference type="PROSITE" id="PS00831">
    <property type="entry name" value="RIBOSOMAL_L27"/>
    <property type="match status" value="1"/>
</dbReference>
<proteinExistence type="inferred from homology"/>
<feature type="propeptide" id="PRO_0000459898" evidence="1">
    <location>
        <begin position="1"/>
        <end position="9"/>
    </location>
</feature>
<feature type="chain" id="PRO_1000211931" description="Large ribosomal subunit protein bL27">
    <location>
        <begin position="10"/>
        <end position="96"/>
    </location>
</feature>
<gene>
    <name evidence="2" type="primary">rpmA</name>
    <name type="ordered locus">GWCH70_2540</name>
</gene>
<accession>C5D5G7</accession>
<protein>
    <recommendedName>
        <fullName evidence="2">Large ribosomal subunit protein bL27</fullName>
    </recommendedName>
    <alternativeName>
        <fullName evidence="3">50S ribosomal protein L27</fullName>
    </alternativeName>
</protein>
<sequence length="96" mass="10580">MLRLDLQFFASKKGVGSTKNGRDSIAKRLGAKRADGQFVTGGSILYRQRGTKIHPGLNVGRGGDDTLYAKIDGIVRFERLGRDRKRVSVYPVSKEA</sequence>
<evidence type="ECO:0000250" key="1">
    <source>
        <dbReference type="UniProtKB" id="Q2FXT0"/>
    </source>
</evidence>
<evidence type="ECO:0000255" key="2">
    <source>
        <dbReference type="HAMAP-Rule" id="MF_00539"/>
    </source>
</evidence>
<evidence type="ECO:0000305" key="3"/>
<organism>
    <name type="scientific">Geobacillus sp. (strain WCH70)</name>
    <dbReference type="NCBI Taxonomy" id="471223"/>
    <lineage>
        <taxon>Bacteria</taxon>
        <taxon>Bacillati</taxon>
        <taxon>Bacillota</taxon>
        <taxon>Bacilli</taxon>
        <taxon>Bacillales</taxon>
        <taxon>Anoxybacillaceae</taxon>
        <taxon>Geobacillus</taxon>
    </lineage>
</organism>
<comment type="PTM">
    <text evidence="1">The N-terminus is cleaved by ribosomal processing cysteine protease Prp.</text>
</comment>
<comment type="similarity">
    <text evidence="2">Belongs to the bacterial ribosomal protein bL27 family.</text>
</comment>